<gene>
    <name evidence="1" type="primary">rplK</name>
    <name type="ordered locus">APP7_1778</name>
</gene>
<dbReference type="EMBL" id="CP001091">
    <property type="protein sequence ID" value="ACE62430.1"/>
    <property type="molecule type" value="Genomic_DNA"/>
</dbReference>
<dbReference type="RefSeq" id="WP_005599211.1">
    <property type="nucleotide sequence ID" value="NC_010939.1"/>
</dbReference>
<dbReference type="SMR" id="B3GYU4"/>
<dbReference type="GeneID" id="92743718"/>
<dbReference type="KEGG" id="apa:APP7_1778"/>
<dbReference type="HOGENOM" id="CLU_074237_2_0_6"/>
<dbReference type="Proteomes" id="UP000001226">
    <property type="component" value="Chromosome"/>
</dbReference>
<dbReference type="GO" id="GO:0022625">
    <property type="term" value="C:cytosolic large ribosomal subunit"/>
    <property type="evidence" value="ECO:0007669"/>
    <property type="project" value="TreeGrafter"/>
</dbReference>
<dbReference type="GO" id="GO:0070180">
    <property type="term" value="F:large ribosomal subunit rRNA binding"/>
    <property type="evidence" value="ECO:0007669"/>
    <property type="project" value="UniProtKB-UniRule"/>
</dbReference>
<dbReference type="GO" id="GO:0003735">
    <property type="term" value="F:structural constituent of ribosome"/>
    <property type="evidence" value="ECO:0007669"/>
    <property type="project" value="InterPro"/>
</dbReference>
<dbReference type="GO" id="GO:0006412">
    <property type="term" value="P:translation"/>
    <property type="evidence" value="ECO:0007669"/>
    <property type="project" value="UniProtKB-UniRule"/>
</dbReference>
<dbReference type="CDD" id="cd00349">
    <property type="entry name" value="Ribosomal_L11"/>
    <property type="match status" value="1"/>
</dbReference>
<dbReference type="FunFam" id="1.10.10.250:FF:000001">
    <property type="entry name" value="50S ribosomal protein L11"/>
    <property type="match status" value="1"/>
</dbReference>
<dbReference type="FunFam" id="3.30.1550.10:FF:000001">
    <property type="entry name" value="50S ribosomal protein L11"/>
    <property type="match status" value="1"/>
</dbReference>
<dbReference type="Gene3D" id="1.10.10.250">
    <property type="entry name" value="Ribosomal protein L11, C-terminal domain"/>
    <property type="match status" value="1"/>
</dbReference>
<dbReference type="Gene3D" id="3.30.1550.10">
    <property type="entry name" value="Ribosomal protein L11/L12, N-terminal domain"/>
    <property type="match status" value="1"/>
</dbReference>
<dbReference type="HAMAP" id="MF_00736">
    <property type="entry name" value="Ribosomal_uL11"/>
    <property type="match status" value="1"/>
</dbReference>
<dbReference type="InterPro" id="IPR000911">
    <property type="entry name" value="Ribosomal_uL11"/>
</dbReference>
<dbReference type="InterPro" id="IPR006519">
    <property type="entry name" value="Ribosomal_uL11_bac-typ"/>
</dbReference>
<dbReference type="InterPro" id="IPR020783">
    <property type="entry name" value="Ribosomal_uL11_C"/>
</dbReference>
<dbReference type="InterPro" id="IPR036769">
    <property type="entry name" value="Ribosomal_uL11_C_sf"/>
</dbReference>
<dbReference type="InterPro" id="IPR020784">
    <property type="entry name" value="Ribosomal_uL11_N"/>
</dbReference>
<dbReference type="InterPro" id="IPR036796">
    <property type="entry name" value="Ribosomal_uL11_N_sf"/>
</dbReference>
<dbReference type="NCBIfam" id="TIGR01632">
    <property type="entry name" value="L11_bact"/>
    <property type="match status" value="1"/>
</dbReference>
<dbReference type="PANTHER" id="PTHR11661">
    <property type="entry name" value="60S RIBOSOMAL PROTEIN L12"/>
    <property type="match status" value="1"/>
</dbReference>
<dbReference type="PANTHER" id="PTHR11661:SF1">
    <property type="entry name" value="LARGE RIBOSOMAL SUBUNIT PROTEIN UL11M"/>
    <property type="match status" value="1"/>
</dbReference>
<dbReference type="Pfam" id="PF00298">
    <property type="entry name" value="Ribosomal_L11"/>
    <property type="match status" value="1"/>
</dbReference>
<dbReference type="Pfam" id="PF03946">
    <property type="entry name" value="Ribosomal_L11_N"/>
    <property type="match status" value="1"/>
</dbReference>
<dbReference type="SMART" id="SM00649">
    <property type="entry name" value="RL11"/>
    <property type="match status" value="1"/>
</dbReference>
<dbReference type="SUPFAM" id="SSF54747">
    <property type="entry name" value="Ribosomal L11/L12e N-terminal domain"/>
    <property type="match status" value="1"/>
</dbReference>
<dbReference type="SUPFAM" id="SSF46906">
    <property type="entry name" value="Ribosomal protein L11, C-terminal domain"/>
    <property type="match status" value="1"/>
</dbReference>
<dbReference type="PROSITE" id="PS00359">
    <property type="entry name" value="RIBOSOMAL_L11"/>
    <property type="match status" value="1"/>
</dbReference>
<feature type="chain" id="PRO_1000132854" description="Large ribosomal subunit protein uL11">
    <location>
        <begin position="1"/>
        <end position="142"/>
    </location>
</feature>
<evidence type="ECO:0000255" key="1">
    <source>
        <dbReference type="HAMAP-Rule" id="MF_00736"/>
    </source>
</evidence>
<evidence type="ECO:0000305" key="2"/>
<accession>B3GYU4</accession>
<proteinExistence type="inferred from homology"/>
<sequence length="142" mass="14962">MAKKVQAYVKLQVAAGMANPSPPVGPALGQQGVNIMEFCKAFNARTESLEKGLPIPVVITVYADRSFTFVTKTPPAAVLLKKAVGIKSGSGKPNKDKVGTVTQEQLRQIAETKAADMTGATIETKMKSIAGTARSMGLIVEE</sequence>
<name>RL11_ACTP7</name>
<reference key="1">
    <citation type="submission" date="2008-06" db="EMBL/GenBank/DDBJ databases">
        <title>Genome and proteome analysis of A. pleuropneumoniae serotype 7.</title>
        <authorList>
            <person name="Linke B."/>
            <person name="Buettner F."/>
            <person name="Martinez-Arias R."/>
            <person name="Goesmann A."/>
            <person name="Baltes N."/>
            <person name="Tegetmeyer H."/>
            <person name="Singh M."/>
            <person name="Gerlach G.F."/>
        </authorList>
    </citation>
    <scope>NUCLEOTIDE SEQUENCE [LARGE SCALE GENOMIC DNA]</scope>
    <source>
        <strain>AP76</strain>
    </source>
</reference>
<protein>
    <recommendedName>
        <fullName evidence="1">Large ribosomal subunit protein uL11</fullName>
    </recommendedName>
    <alternativeName>
        <fullName evidence="2">50S ribosomal protein L11</fullName>
    </alternativeName>
</protein>
<keyword id="KW-0488">Methylation</keyword>
<keyword id="KW-0687">Ribonucleoprotein</keyword>
<keyword id="KW-0689">Ribosomal protein</keyword>
<keyword id="KW-0694">RNA-binding</keyword>
<keyword id="KW-0699">rRNA-binding</keyword>
<comment type="function">
    <text evidence="1">Forms part of the ribosomal stalk which helps the ribosome interact with GTP-bound translation factors.</text>
</comment>
<comment type="subunit">
    <text evidence="1">Part of the ribosomal stalk of the 50S ribosomal subunit. Interacts with L10 and the large rRNA to form the base of the stalk. L10 forms an elongated spine to which L12 dimers bind in a sequential fashion forming a multimeric L10(L12)X complex.</text>
</comment>
<comment type="PTM">
    <text evidence="1">One or more lysine residues are methylated.</text>
</comment>
<comment type="similarity">
    <text evidence="1">Belongs to the universal ribosomal protein uL11 family.</text>
</comment>
<organism>
    <name type="scientific">Actinobacillus pleuropneumoniae serotype 7 (strain AP76)</name>
    <dbReference type="NCBI Taxonomy" id="537457"/>
    <lineage>
        <taxon>Bacteria</taxon>
        <taxon>Pseudomonadati</taxon>
        <taxon>Pseudomonadota</taxon>
        <taxon>Gammaproteobacteria</taxon>
        <taxon>Pasteurellales</taxon>
        <taxon>Pasteurellaceae</taxon>
        <taxon>Actinobacillus</taxon>
    </lineage>
</organism>